<evidence type="ECO:0000255" key="1">
    <source>
        <dbReference type="HAMAP-Rule" id="MF_00811"/>
    </source>
</evidence>
<proteinExistence type="inferred from homology"/>
<name>DAPD_BURMS</name>
<accession>A1V582</accession>
<protein>
    <recommendedName>
        <fullName evidence="1">2,3,4,5-tetrahydropyridine-2,6-dicarboxylate N-succinyltransferase</fullName>
        <ecNumber evidence="1">2.3.1.117</ecNumber>
    </recommendedName>
    <alternativeName>
        <fullName evidence="1">Tetrahydrodipicolinate N-succinyltransferase</fullName>
        <shortName evidence="1">THDP succinyltransferase</shortName>
        <shortName evidence="1">THP succinyltransferase</shortName>
        <shortName evidence="1">Tetrahydropicolinate succinylase</shortName>
    </alternativeName>
</protein>
<feature type="chain" id="PRO_1000047129" description="2,3,4,5-tetrahydropyridine-2,6-dicarboxylate N-succinyltransferase">
    <location>
        <begin position="1"/>
        <end position="275"/>
    </location>
</feature>
<feature type="binding site" evidence="1">
    <location>
        <position position="106"/>
    </location>
    <ligand>
        <name>substrate</name>
    </ligand>
</feature>
<feature type="binding site" evidence="1">
    <location>
        <position position="143"/>
    </location>
    <ligand>
        <name>substrate</name>
    </ligand>
</feature>
<organism>
    <name type="scientific">Burkholderia mallei (strain SAVP1)</name>
    <dbReference type="NCBI Taxonomy" id="320388"/>
    <lineage>
        <taxon>Bacteria</taxon>
        <taxon>Pseudomonadati</taxon>
        <taxon>Pseudomonadota</taxon>
        <taxon>Betaproteobacteria</taxon>
        <taxon>Burkholderiales</taxon>
        <taxon>Burkholderiaceae</taxon>
        <taxon>Burkholderia</taxon>
        <taxon>pseudomallei group</taxon>
    </lineage>
</organism>
<gene>
    <name evidence="1" type="primary">dapD</name>
    <name type="ordered locus">BMASAVP1_A2069</name>
</gene>
<keyword id="KW-0012">Acyltransferase</keyword>
<keyword id="KW-0028">Amino-acid biosynthesis</keyword>
<keyword id="KW-0963">Cytoplasm</keyword>
<keyword id="KW-0220">Diaminopimelate biosynthesis</keyword>
<keyword id="KW-0457">Lysine biosynthesis</keyword>
<keyword id="KW-0677">Repeat</keyword>
<keyword id="KW-0808">Transferase</keyword>
<dbReference type="EC" id="2.3.1.117" evidence="1"/>
<dbReference type="EMBL" id="CP000526">
    <property type="protein sequence ID" value="ABM51910.1"/>
    <property type="molecule type" value="Genomic_DNA"/>
</dbReference>
<dbReference type="RefSeq" id="WP_004191680.1">
    <property type="nucleotide sequence ID" value="NC_008785.1"/>
</dbReference>
<dbReference type="SMR" id="A1V582"/>
<dbReference type="GeneID" id="92979291"/>
<dbReference type="KEGG" id="bmv:BMASAVP1_A2069"/>
<dbReference type="HOGENOM" id="CLU_050859_0_1_4"/>
<dbReference type="UniPathway" id="UPA00034">
    <property type="reaction ID" value="UER00019"/>
</dbReference>
<dbReference type="GO" id="GO:0005737">
    <property type="term" value="C:cytoplasm"/>
    <property type="evidence" value="ECO:0007669"/>
    <property type="project" value="UniProtKB-SubCell"/>
</dbReference>
<dbReference type="GO" id="GO:0008666">
    <property type="term" value="F:2,3,4,5-tetrahydropyridine-2,6-dicarboxylate N-succinyltransferase activity"/>
    <property type="evidence" value="ECO:0007669"/>
    <property type="project" value="UniProtKB-UniRule"/>
</dbReference>
<dbReference type="GO" id="GO:0016779">
    <property type="term" value="F:nucleotidyltransferase activity"/>
    <property type="evidence" value="ECO:0007669"/>
    <property type="project" value="TreeGrafter"/>
</dbReference>
<dbReference type="GO" id="GO:0019877">
    <property type="term" value="P:diaminopimelate biosynthetic process"/>
    <property type="evidence" value="ECO:0007669"/>
    <property type="project" value="UniProtKB-UniRule"/>
</dbReference>
<dbReference type="GO" id="GO:0009089">
    <property type="term" value="P:lysine biosynthetic process via diaminopimelate"/>
    <property type="evidence" value="ECO:0007669"/>
    <property type="project" value="UniProtKB-UniRule"/>
</dbReference>
<dbReference type="CDD" id="cd03350">
    <property type="entry name" value="LbH_THP_succinylT"/>
    <property type="match status" value="1"/>
</dbReference>
<dbReference type="Gene3D" id="2.160.10.10">
    <property type="entry name" value="Hexapeptide repeat proteins"/>
    <property type="match status" value="1"/>
</dbReference>
<dbReference type="Gene3D" id="1.10.166.10">
    <property type="entry name" value="Tetrahydrodipicolinate-N-succinyltransferase, N-terminal domain"/>
    <property type="match status" value="1"/>
</dbReference>
<dbReference type="HAMAP" id="MF_00811">
    <property type="entry name" value="DapD"/>
    <property type="match status" value="1"/>
</dbReference>
<dbReference type="InterPro" id="IPR005664">
    <property type="entry name" value="DapD_Trfase_Hexpep_rpt_fam"/>
</dbReference>
<dbReference type="InterPro" id="IPR001451">
    <property type="entry name" value="Hexapep"/>
</dbReference>
<dbReference type="InterPro" id="IPR018357">
    <property type="entry name" value="Hexapep_transf_CS"/>
</dbReference>
<dbReference type="InterPro" id="IPR023180">
    <property type="entry name" value="THP_succinylTrfase_dom1"/>
</dbReference>
<dbReference type="InterPro" id="IPR037133">
    <property type="entry name" value="THP_succinylTrfase_N_sf"/>
</dbReference>
<dbReference type="InterPro" id="IPR011004">
    <property type="entry name" value="Trimer_LpxA-like_sf"/>
</dbReference>
<dbReference type="NCBIfam" id="TIGR00965">
    <property type="entry name" value="dapD"/>
    <property type="match status" value="1"/>
</dbReference>
<dbReference type="NCBIfam" id="NF008808">
    <property type="entry name" value="PRK11830.1"/>
    <property type="match status" value="1"/>
</dbReference>
<dbReference type="PANTHER" id="PTHR19136:SF52">
    <property type="entry name" value="2,3,4,5-TETRAHYDROPYRIDINE-2,6-DICARBOXYLATE N-SUCCINYLTRANSFERASE"/>
    <property type="match status" value="1"/>
</dbReference>
<dbReference type="PANTHER" id="PTHR19136">
    <property type="entry name" value="MOLYBDENUM COFACTOR GUANYLYLTRANSFERASE"/>
    <property type="match status" value="1"/>
</dbReference>
<dbReference type="Pfam" id="PF14602">
    <property type="entry name" value="Hexapep_2"/>
    <property type="match status" value="1"/>
</dbReference>
<dbReference type="Pfam" id="PF14805">
    <property type="entry name" value="THDPS_N_2"/>
    <property type="match status" value="1"/>
</dbReference>
<dbReference type="SUPFAM" id="SSF51161">
    <property type="entry name" value="Trimeric LpxA-like enzymes"/>
    <property type="match status" value="1"/>
</dbReference>
<dbReference type="PROSITE" id="PS00101">
    <property type="entry name" value="HEXAPEP_TRANSFERASES"/>
    <property type="match status" value="1"/>
</dbReference>
<comment type="catalytic activity">
    <reaction evidence="1">
        <text>(S)-2,3,4,5-tetrahydrodipicolinate + succinyl-CoA + H2O = (S)-2-succinylamino-6-oxoheptanedioate + CoA</text>
        <dbReference type="Rhea" id="RHEA:17325"/>
        <dbReference type="ChEBI" id="CHEBI:15377"/>
        <dbReference type="ChEBI" id="CHEBI:15685"/>
        <dbReference type="ChEBI" id="CHEBI:16845"/>
        <dbReference type="ChEBI" id="CHEBI:57287"/>
        <dbReference type="ChEBI" id="CHEBI:57292"/>
        <dbReference type="EC" id="2.3.1.117"/>
    </reaction>
</comment>
<comment type="pathway">
    <text evidence="1">Amino-acid biosynthesis; L-lysine biosynthesis via DAP pathway; LL-2,6-diaminopimelate from (S)-tetrahydrodipicolinate (succinylase route): step 1/3.</text>
</comment>
<comment type="subunit">
    <text evidence="1">Homotrimer.</text>
</comment>
<comment type="subcellular location">
    <subcellularLocation>
        <location evidence="1">Cytoplasm</location>
    </subcellularLocation>
</comment>
<comment type="similarity">
    <text evidence="1">Belongs to the transferase hexapeptide repeat family.</text>
</comment>
<sequence>MSQQLQQIIDNAWENRAELSPKAASAEIREAVAHAIEQLDRGALRVAEKIDGAWTVHQWLKKAVLLSFRLEDNAPMPAGGYSQFYDKVPSKFANYTAEDFAAGGFRVVPPAIARRGSFIAKNVVLMPSYTNIGAYVDEGTMVDTWATVGSCAQIGKNVHLSGGVGIGGVLEPLQANPVIIEDNCFIGARSEVVEGVIVEENSVISMGVYLGQSTKIYDRETGEVTYGRIPAGSVVVAGNLPAKDGTHSLYCAVIVKKVDAKTRAKVGLNELLRGD</sequence>
<reference key="1">
    <citation type="journal article" date="2010" name="Genome Biol. Evol.">
        <title>Continuing evolution of Burkholderia mallei through genome reduction and large-scale rearrangements.</title>
        <authorList>
            <person name="Losada L."/>
            <person name="Ronning C.M."/>
            <person name="DeShazer D."/>
            <person name="Woods D."/>
            <person name="Fedorova N."/>
            <person name="Kim H.S."/>
            <person name="Shabalina S.A."/>
            <person name="Pearson T.R."/>
            <person name="Brinkac L."/>
            <person name="Tan P."/>
            <person name="Nandi T."/>
            <person name="Crabtree J."/>
            <person name="Badger J."/>
            <person name="Beckstrom-Sternberg S."/>
            <person name="Saqib M."/>
            <person name="Schutzer S.E."/>
            <person name="Keim P."/>
            <person name="Nierman W.C."/>
        </authorList>
    </citation>
    <scope>NUCLEOTIDE SEQUENCE [LARGE SCALE GENOMIC DNA]</scope>
    <source>
        <strain>SAVP1</strain>
    </source>
</reference>